<comment type="function">
    <text evidence="1">Involved in the catabolism of homogentisate (2,5-dihydroxyphenylacetate or 2,5-OH-PhAc), a central intermediate in the degradation of phenylalanine and tyrosine. Catalyzes the oxidative ring cleavage of the aromatic ring of homogentisate to yield maleylacetoacetate.</text>
</comment>
<comment type="catalytic activity">
    <reaction evidence="1">
        <text>homogentisate + O2 = 4-maleylacetoacetate + H(+)</text>
        <dbReference type="Rhea" id="RHEA:15449"/>
        <dbReference type="ChEBI" id="CHEBI:15378"/>
        <dbReference type="ChEBI" id="CHEBI:15379"/>
        <dbReference type="ChEBI" id="CHEBI:16169"/>
        <dbReference type="ChEBI" id="CHEBI:17105"/>
        <dbReference type="EC" id="1.13.11.5"/>
    </reaction>
</comment>
<comment type="cofactor">
    <cofactor evidence="1">
        <name>Fe cation</name>
        <dbReference type="ChEBI" id="CHEBI:24875"/>
    </cofactor>
</comment>
<comment type="pathway">
    <text evidence="1">Amino-acid degradation; L-phenylalanine degradation; acetoacetate and fumarate from L-phenylalanine: step 4/6.</text>
</comment>
<comment type="subunit">
    <text evidence="1">Hexamer; dimer of trimers.</text>
</comment>
<comment type="similarity">
    <text evidence="1">Belongs to the homogentisate dioxygenase family.</text>
</comment>
<proteinExistence type="inferred from homology"/>
<reference key="1">
    <citation type="submission" date="2007-06" db="EMBL/GenBank/DDBJ databases">
        <title>Complete sequence of Sinorhizobium medicae WSM419 chromosome.</title>
        <authorList>
            <consortium name="US DOE Joint Genome Institute"/>
            <person name="Copeland A."/>
            <person name="Lucas S."/>
            <person name="Lapidus A."/>
            <person name="Barry K."/>
            <person name="Glavina del Rio T."/>
            <person name="Dalin E."/>
            <person name="Tice H."/>
            <person name="Pitluck S."/>
            <person name="Chain P."/>
            <person name="Malfatti S."/>
            <person name="Shin M."/>
            <person name="Vergez L."/>
            <person name="Schmutz J."/>
            <person name="Larimer F."/>
            <person name="Land M."/>
            <person name="Hauser L."/>
            <person name="Kyrpides N."/>
            <person name="Mikhailova N."/>
            <person name="Reeve W.G."/>
            <person name="Richardson P."/>
        </authorList>
    </citation>
    <scope>NUCLEOTIDE SEQUENCE [LARGE SCALE GENOMIC DNA]</scope>
    <source>
        <strain>WSM419</strain>
    </source>
</reference>
<accession>A6UDD3</accession>
<sequence>MLEKAERQRKAAPDQQRSAGYMPGFGNDFETESLPGSLPQGQNSPQKCNYGLYAEQLSGSPFTAPRGTNERSWLYRIRPSVRHTGRFTKIDYPHWKTAPHTPEHSLALGQLRWSPLPAPSQSLTFLQGIRTMTTAGDALTQVGMAAHAYAFNADMVDDYFFNADGELLIVPETGAFQVFTELGRIDVEPSEICLVPRGMMFKVTRLGDEKVWRGYICENYGAKFTLPDRGPIGANCLANPRDFKTPVAAYEDKETPCRVQVKWCGSFHTAEIAHSPLDVVAWHGNYAPYKYDLKTFSPVGAILFDHPDPSIFTVLTAPSGEEGTANVDFVIFPPRWLVAEHTFRPPWYHRNIMSEFMGLIHGRYDAKEEGFVPGGMSLHNMMLAHGPDFSGFEKASNGELKPVKLDNTMAFMFETRFPQQLTTFAAELETLQDDYIDCWSGLERKFDGTPGIK</sequence>
<protein>
    <recommendedName>
        <fullName evidence="1">Homogentisate 1,2-dioxygenase</fullName>
        <shortName evidence="1">HGDO</shortName>
        <ecNumber evidence="1">1.13.11.5</ecNumber>
    </recommendedName>
    <alternativeName>
        <fullName evidence="1">Homogentisate oxygenase</fullName>
    </alternativeName>
    <alternativeName>
        <fullName evidence="1">Homogentisic acid oxidase</fullName>
    </alternativeName>
    <alternativeName>
        <fullName evidence="1">Homogentisicase</fullName>
    </alternativeName>
</protein>
<evidence type="ECO:0000255" key="1">
    <source>
        <dbReference type="HAMAP-Rule" id="MF_00334"/>
    </source>
</evidence>
<evidence type="ECO:0000256" key="2">
    <source>
        <dbReference type="SAM" id="MobiDB-lite"/>
    </source>
</evidence>
<name>HGD_SINMW</name>
<organism>
    <name type="scientific">Sinorhizobium medicae (strain WSM419)</name>
    <name type="common">Ensifer medicae</name>
    <dbReference type="NCBI Taxonomy" id="366394"/>
    <lineage>
        <taxon>Bacteria</taxon>
        <taxon>Pseudomonadati</taxon>
        <taxon>Pseudomonadota</taxon>
        <taxon>Alphaproteobacteria</taxon>
        <taxon>Hyphomicrobiales</taxon>
        <taxon>Rhizobiaceae</taxon>
        <taxon>Sinorhizobium/Ensifer group</taxon>
        <taxon>Sinorhizobium</taxon>
    </lineage>
</organism>
<keyword id="KW-0223">Dioxygenase</keyword>
<keyword id="KW-0408">Iron</keyword>
<keyword id="KW-0479">Metal-binding</keyword>
<keyword id="KW-0560">Oxidoreductase</keyword>
<keyword id="KW-0585">Phenylalanine catabolism</keyword>
<keyword id="KW-0828">Tyrosine catabolism</keyword>
<dbReference type="EC" id="1.13.11.5" evidence="1"/>
<dbReference type="EMBL" id="CP000738">
    <property type="protein sequence ID" value="ABR61663.1"/>
    <property type="molecule type" value="Genomic_DNA"/>
</dbReference>
<dbReference type="RefSeq" id="WP_012067048.1">
    <property type="nucleotide sequence ID" value="NC_009636.1"/>
</dbReference>
<dbReference type="RefSeq" id="YP_001328498.1">
    <property type="nucleotide sequence ID" value="NC_009636.1"/>
</dbReference>
<dbReference type="SMR" id="A6UDD3"/>
<dbReference type="STRING" id="366394.Smed_2833"/>
<dbReference type="GeneID" id="61614760"/>
<dbReference type="KEGG" id="smd:Smed_2833"/>
<dbReference type="PATRIC" id="fig|366394.8.peg.6043"/>
<dbReference type="eggNOG" id="COG3508">
    <property type="taxonomic scope" value="Bacteria"/>
</dbReference>
<dbReference type="HOGENOM" id="CLU_027174_0_0_5"/>
<dbReference type="OrthoDB" id="9811253at2"/>
<dbReference type="UniPathway" id="UPA00139">
    <property type="reaction ID" value="UER00339"/>
</dbReference>
<dbReference type="Proteomes" id="UP000001108">
    <property type="component" value="Chromosome"/>
</dbReference>
<dbReference type="GO" id="GO:0005737">
    <property type="term" value="C:cytoplasm"/>
    <property type="evidence" value="ECO:0007669"/>
    <property type="project" value="TreeGrafter"/>
</dbReference>
<dbReference type="GO" id="GO:0004411">
    <property type="term" value="F:homogentisate 1,2-dioxygenase activity"/>
    <property type="evidence" value="ECO:0007669"/>
    <property type="project" value="UniProtKB-UniRule"/>
</dbReference>
<dbReference type="GO" id="GO:0005506">
    <property type="term" value="F:iron ion binding"/>
    <property type="evidence" value="ECO:0007669"/>
    <property type="project" value="UniProtKB-UniRule"/>
</dbReference>
<dbReference type="GO" id="GO:0006559">
    <property type="term" value="P:L-phenylalanine catabolic process"/>
    <property type="evidence" value="ECO:0007669"/>
    <property type="project" value="UniProtKB-UniRule"/>
</dbReference>
<dbReference type="GO" id="GO:0006572">
    <property type="term" value="P:tyrosine catabolic process"/>
    <property type="evidence" value="ECO:0007669"/>
    <property type="project" value="UniProtKB-UniRule"/>
</dbReference>
<dbReference type="CDD" id="cd07000">
    <property type="entry name" value="cupin_HGO_N"/>
    <property type="match status" value="1"/>
</dbReference>
<dbReference type="FunFam" id="2.60.120.10:FF:000053">
    <property type="entry name" value="Homogentisate 1,2-dioxygenase"/>
    <property type="match status" value="1"/>
</dbReference>
<dbReference type="Gene3D" id="2.60.120.10">
    <property type="entry name" value="Jelly Rolls"/>
    <property type="match status" value="1"/>
</dbReference>
<dbReference type="HAMAP" id="MF_00334">
    <property type="entry name" value="Homogentis_dioxygen"/>
    <property type="match status" value="1"/>
</dbReference>
<dbReference type="InterPro" id="IPR046451">
    <property type="entry name" value="HgmA_C"/>
</dbReference>
<dbReference type="InterPro" id="IPR046452">
    <property type="entry name" value="HgmA_N"/>
</dbReference>
<dbReference type="InterPro" id="IPR005708">
    <property type="entry name" value="Homogentis_dOase"/>
</dbReference>
<dbReference type="InterPro" id="IPR022950">
    <property type="entry name" value="Homogentis_dOase_bac"/>
</dbReference>
<dbReference type="InterPro" id="IPR014710">
    <property type="entry name" value="RmlC-like_jellyroll"/>
</dbReference>
<dbReference type="InterPro" id="IPR011051">
    <property type="entry name" value="RmlC_Cupin_sf"/>
</dbReference>
<dbReference type="NCBIfam" id="TIGR01015">
    <property type="entry name" value="hmgA"/>
    <property type="match status" value="1"/>
</dbReference>
<dbReference type="PANTHER" id="PTHR11056">
    <property type="entry name" value="HOMOGENTISATE 1,2-DIOXYGENASE"/>
    <property type="match status" value="1"/>
</dbReference>
<dbReference type="PANTHER" id="PTHR11056:SF0">
    <property type="entry name" value="HOMOGENTISATE 1,2-DIOXYGENASE"/>
    <property type="match status" value="1"/>
</dbReference>
<dbReference type="Pfam" id="PF04209">
    <property type="entry name" value="HgmA_C"/>
    <property type="match status" value="1"/>
</dbReference>
<dbReference type="Pfam" id="PF20510">
    <property type="entry name" value="HgmA_N"/>
    <property type="match status" value="1"/>
</dbReference>
<dbReference type="SUPFAM" id="SSF51182">
    <property type="entry name" value="RmlC-like cupins"/>
    <property type="match status" value="1"/>
</dbReference>
<gene>
    <name evidence="1" type="primary">hmgA</name>
    <name type="ordered locus">Smed_2833</name>
</gene>
<feature type="chain" id="PRO_1000019544" description="Homogentisate 1,2-dioxygenase">
    <location>
        <begin position="1"/>
        <end position="453"/>
    </location>
</feature>
<feature type="region of interest" description="Disordered" evidence="2">
    <location>
        <begin position="1"/>
        <end position="43"/>
    </location>
</feature>
<feature type="compositionally biased region" description="Basic and acidic residues" evidence="2">
    <location>
        <begin position="1"/>
        <end position="12"/>
    </location>
</feature>
<feature type="active site" description="Proton acceptor" evidence="1">
    <location>
        <position position="306"/>
    </location>
</feature>
<feature type="binding site" evidence="1">
    <location>
        <position position="349"/>
    </location>
    <ligand>
        <name>Fe cation</name>
        <dbReference type="ChEBI" id="CHEBI:24875"/>
    </ligand>
</feature>
<feature type="binding site" evidence="1">
    <location>
        <position position="355"/>
    </location>
    <ligand>
        <name>Fe cation</name>
        <dbReference type="ChEBI" id="CHEBI:24875"/>
    </ligand>
</feature>
<feature type="binding site" evidence="1">
    <location>
        <position position="364"/>
    </location>
    <ligand>
        <name>homogentisate</name>
        <dbReference type="ChEBI" id="CHEBI:16169"/>
    </ligand>
</feature>
<feature type="binding site" evidence="1">
    <location>
        <position position="385"/>
    </location>
    <ligand>
        <name>Fe cation</name>
        <dbReference type="ChEBI" id="CHEBI:24875"/>
    </ligand>
</feature>
<feature type="binding site" evidence="1">
    <location>
        <position position="385"/>
    </location>
    <ligand>
        <name>homogentisate</name>
        <dbReference type="ChEBI" id="CHEBI:16169"/>
    </ligand>
</feature>